<sequence>MNTIWIAVGALTLLGLVFGAILGYASRRFAVEDDPVVEKIDAILPQSQCGQCGYPGCRPYAEAVGLQGEKINRCAPGGEAVMLKMAELLNVEPQPCDGEEQQAAPVRMLAVIDENNCIGCTKCIQACPVDAIVGATRAMHTVMSDLCTGCNLCVDPCPTHCIELRPVNETPDSWKWDLNTIPVRIIPVEQHA</sequence>
<reference key="1">
    <citation type="journal article" date="2009" name="PLoS ONE">
        <title>Salmonella paratyphi C: genetic divergence from Salmonella choleraesuis and pathogenic convergence with Salmonella typhi.</title>
        <authorList>
            <person name="Liu W.-Q."/>
            <person name="Feng Y."/>
            <person name="Wang Y."/>
            <person name="Zou Q.-H."/>
            <person name="Chen F."/>
            <person name="Guo J.-T."/>
            <person name="Peng Y.-H."/>
            <person name="Jin Y."/>
            <person name="Li Y.-G."/>
            <person name="Hu S.-N."/>
            <person name="Johnston R.N."/>
            <person name="Liu G.-R."/>
            <person name="Liu S.-L."/>
        </authorList>
    </citation>
    <scope>NUCLEOTIDE SEQUENCE [LARGE SCALE GENOMIC DNA]</scope>
    <source>
        <strain>RKS4594</strain>
    </source>
</reference>
<protein>
    <recommendedName>
        <fullName evidence="1">Ion-translocating oxidoreductase complex subunit B</fullName>
        <ecNumber evidence="1">7.-.-.-</ecNumber>
    </recommendedName>
    <alternativeName>
        <fullName evidence="1">Rsx electron transport complex subunit B</fullName>
    </alternativeName>
</protein>
<dbReference type="EC" id="7.-.-.-" evidence="1"/>
<dbReference type="EMBL" id="CP000857">
    <property type="protein sequence ID" value="ACN46390.1"/>
    <property type="molecule type" value="Genomic_DNA"/>
</dbReference>
<dbReference type="RefSeq" id="WP_001092600.1">
    <property type="nucleotide sequence ID" value="NC_012125.1"/>
</dbReference>
<dbReference type="SMR" id="C0Q507"/>
<dbReference type="KEGG" id="sei:SPC_2273"/>
<dbReference type="HOGENOM" id="CLU_063448_2_0_6"/>
<dbReference type="Proteomes" id="UP000001599">
    <property type="component" value="Chromosome"/>
</dbReference>
<dbReference type="GO" id="GO:0005886">
    <property type="term" value="C:plasma membrane"/>
    <property type="evidence" value="ECO:0007669"/>
    <property type="project" value="UniProtKB-SubCell"/>
</dbReference>
<dbReference type="GO" id="GO:0051539">
    <property type="term" value="F:4 iron, 4 sulfur cluster binding"/>
    <property type="evidence" value="ECO:0007669"/>
    <property type="project" value="UniProtKB-UniRule"/>
</dbReference>
<dbReference type="GO" id="GO:0009055">
    <property type="term" value="F:electron transfer activity"/>
    <property type="evidence" value="ECO:0007669"/>
    <property type="project" value="InterPro"/>
</dbReference>
<dbReference type="GO" id="GO:0046872">
    <property type="term" value="F:metal ion binding"/>
    <property type="evidence" value="ECO:0007669"/>
    <property type="project" value="UniProtKB-KW"/>
</dbReference>
<dbReference type="GO" id="GO:0022900">
    <property type="term" value="P:electron transport chain"/>
    <property type="evidence" value="ECO:0007669"/>
    <property type="project" value="UniProtKB-UniRule"/>
</dbReference>
<dbReference type="FunFam" id="1.10.15.40:FF:000001">
    <property type="entry name" value="Ion-translocating oxidoreductase complex subunit B"/>
    <property type="match status" value="1"/>
</dbReference>
<dbReference type="Gene3D" id="3.30.70.20">
    <property type="match status" value="1"/>
</dbReference>
<dbReference type="Gene3D" id="1.10.15.40">
    <property type="entry name" value="Electron transport complex subunit B, putative Fe-S cluster"/>
    <property type="match status" value="1"/>
</dbReference>
<dbReference type="HAMAP" id="MF_00463">
    <property type="entry name" value="RsxB_RnfB"/>
    <property type="match status" value="1"/>
</dbReference>
<dbReference type="InterPro" id="IPR007202">
    <property type="entry name" value="4Fe-4S_dom"/>
</dbReference>
<dbReference type="InterPro" id="IPR017896">
    <property type="entry name" value="4Fe4S_Fe-S-bd"/>
</dbReference>
<dbReference type="InterPro" id="IPR017900">
    <property type="entry name" value="4Fe4S_Fe_S_CS"/>
</dbReference>
<dbReference type="InterPro" id="IPR050395">
    <property type="entry name" value="4Fe4S_Ferredoxin_RnfB"/>
</dbReference>
<dbReference type="InterPro" id="IPR010207">
    <property type="entry name" value="Elect_transpt_cplx_RnfB/RsxB"/>
</dbReference>
<dbReference type="InterPro" id="IPR016463">
    <property type="entry name" value="RnfB/RsxB_Proteobac"/>
</dbReference>
<dbReference type="NCBIfam" id="NF003475">
    <property type="entry name" value="PRK05113.1"/>
    <property type="match status" value="1"/>
</dbReference>
<dbReference type="NCBIfam" id="TIGR01944">
    <property type="entry name" value="rnfB"/>
    <property type="match status" value="1"/>
</dbReference>
<dbReference type="PANTHER" id="PTHR43560">
    <property type="entry name" value="ION-TRANSLOCATING OXIDOREDUCTASE COMPLEX SUBUNIT B"/>
    <property type="match status" value="1"/>
</dbReference>
<dbReference type="PANTHER" id="PTHR43560:SF1">
    <property type="entry name" value="ION-TRANSLOCATING OXIDOREDUCTASE COMPLEX SUBUNIT B"/>
    <property type="match status" value="1"/>
</dbReference>
<dbReference type="Pfam" id="PF14697">
    <property type="entry name" value="Fer4_21"/>
    <property type="match status" value="1"/>
</dbReference>
<dbReference type="Pfam" id="PF04060">
    <property type="entry name" value="FeS"/>
    <property type="match status" value="1"/>
</dbReference>
<dbReference type="PIRSF" id="PIRSF005784">
    <property type="entry name" value="Elect_transpt_RnfB"/>
    <property type="match status" value="1"/>
</dbReference>
<dbReference type="SUPFAM" id="SSF54862">
    <property type="entry name" value="4Fe-4S ferredoxins"/>
    <property type="match status" value="1"/>
</dbReference>
<dbReference type="PROSITE" id="PS51656">
    <property type="entry name" value="4FE4S"/>
    <property type="match status" value="1"/>
</dbReference>
<dbReference type="PROSITE" id="PS00198">
    <property type="entry name" value="4FE4S_FER_1"/>
    <property type="match status" value="2"/>
</dbReference>
<dbReference type="PROSITE" id="PS51379">
    <property type="entry name" value="4FE4S_FER_2"/>
    <property type="match status" value="2"/>
</dbReference>
<feature type="chain" id="PRO_1000194498" description="Ion-translocating oxidoreductase complex subunit B">
    <location>
        <begin position="1"/>
        <end position="192"/>
    </location>
</feature>
<feature type="domain" description="4Fe-4S" evidence="1">
    <location>
        <begin position="32"/>
        <end position="91"/>
    </location>
</feature>
<feature type="domain" description="4Fe-4S ferredoxin-type 1" evidence="1">
    <location>
        <begin position="108"/>
        <end position="137"/>
    </location>
</feature>
<feature type="domain" description="4Fe-4S ferredoxin-type 2" evidence="1">
    <location>
        <begin position="138"/>
        <end position="167"/>
    </location>
</feature>
<feature type="region of interest" description="Hydrophobic" evidence="1">
    <location>
        <begin position="1"/>
        <end position="26"/>
    </location>
</feature>
<feature type="binding site" evidence="1">
    <location>
        <position position="49"/>
    </location>
    <ligand>
        <name>[4Fe-4S] cluster</name>
        <dbReference type="ChEBI" id="CHEBI:49883"/>
        <label>1</label>
    </ligand>
</feature>
<feature type="binding site" evidence="1">
    <location>
        <position position="52"/>
    </location>
    <ligand>
        <name>[4Fe-4S] cluster</name>
        <dbReference type="ChEBI" id="CHEBI:49883"/>
        <label>1</label>
    </ligand>
</feature>
<feature type="binding site" evidence="1">
    <location>
        <position position="57"/>
    </location>
    <ligand>
        <name>[4Fe-4S] cluster</name>
        <dbReference type="ChEBI" id="CHEBI:49883"/>
        <label>1</label>
    </ligand>
</feature>
<feature type="binding site" evidence="1">
    <location>
        <position position="74"/>
    </location>
    <ligand>
        <name>[4Fe-4S] cluster</name>
        <dbReference type="ChEBI" id="CHEBI:49883"/>
        <label>1</label>
    </ligand>
</feature>
<feature type="binding site" evidence="1">
    <location>
        <position position="117"/>
    </location>
    <ligand>
        <name>[4Fe-4S] cluster</name>
        <dbReference type="ChEBI" id="CHEBI:49883"/>
        <label>2</label>
    </ligand>
</feature>
<feature type="binding site" evidence="1">
    <location>
        <position position="120"/>
    </location>
    <ligand>
        <name>[4Fe-4S] cluster</name>
        <dbReference type="ChEBI" id="CHEBI:49883"/>
        <label>2</label>
    </ligand>
</feature>
<feature type="binding site" evidence="1">
    <location>
        <position position="123"/>
    </location>
    <ligand>
        <name>[4Fe-4S] cluster</name>
        <dbReference type="ChEBI" id="CHEBI:49883"/>
        <label>2</label>
    </ligand>
</feature>
<feature type="binding site" evidence="1">
    <location>
        <position position="127"/>
    </location>
    <ligand>
        <name>[4Fe-4S] cluster</name>
        <dbReference type="ChEBI" id="CHEBI:49883"/>
        <label>3</label>
    </ligand>
</feature>
<feature type="binding site" evidence="1">
    <location>
        <position position="147"/>
    </location>
    <ligand>
        <name>[4Fe-4S] cluster</name>
        <dbReference type="ChEBI" id="CHEBI:49883"/>
        <label>3</label>
    </ligand>
</feature>
<feature type="binding site" evidence="1">
    <location>
        <position position="150"/>
    </location>
    <ligand>
        <name>[4Fe-4S] cluster</name>
        <dbReference type="ChEBI" id="CHEBI:49883"/>
        <label>3</label>
    </ligand>
</feature>
<feature type="binding site" evidence="1">
    <location>
        <position position="153"/>
    </location>
    <ligand>
        <name>[4Fe-4S] cluster</name>
        <dbReference type="ChEBI" id="CHEBI:49883"/>
        <label>3</label>
    </ligand>
</feature>
<feature type="binding site" evidence="1">
    <location>
        <position position="157"/>
    </location>
    <ligand>
        <name>[4Fe-4S] cluster</name>
        <dbReference type="ChEBI" id="CHEBI:49883"/>
        <label>2</label>
    </ligand>
</feature>
<name>RSXB_SALPC</name>
<proteinExistence type="inferred from homology"/>
<keyword id="KW-0004">4Fe-4S</keyword>
<keyword id="KW-0997">Cell inner membrane</keyword>
<keyword id="KW-1003">Cell membrane</keyword>
<keyword id="KW-0249">Electron transport</keyword>
<keyword id="KW-0408">Iron</keyword>
<keyword id="KW-0411">Iron-sulfur</keyword>
<keyword id="KW-0472">Membrane</keyword>
<keyword id="KW-0479">Metal-binding</keyword>
<keyword id="KW-0677">Repeat</keyword>
<keyword id="KW-1278">Translocase</keyword>
<keyword id="KW-0813">Transport</keyword>
<organism>
    <name type="scientific">Salmonella paratyphi C (strain RKS4594)</name>
    <dbReference type="NCBI Taxonomy" id="476213"/>
    <lineage>
        <taxon>Bacteria</taxon>
        <taxon>Pseudomonadati</taxon>
        <taxon>Pseudomonadota</taxon>
        <taxon>Gammaproteobacteria</taxon>
        <taxon>Enterobacterales</taxon>
        <taxon>Enterobacteriaceae</taxon>
        <taxon>Salmonella</taxon>
    </lineage>
</organism>
<comment type="function">
    <text evidence="1">Part of a membrane-bound complex that couples electron transfer with translocation of ions across the membrane. Required to maintain the reduced state of SoxR.</text>
</comment>
<comment type="cofactor">
    <cofactor evidence="1">
        <name>[4Fe-4S] cluster</name>
        <dbReference type="ChEBI" id="CHEBI:49883"/>
    </cofactor>
    <text evidence="1">Binds 3 [4Fe-4S] clusters.</text>
</comment>
<comment type="subunit">
    <text evidence="1">The complex is composed of six subunits: RsxA, RsxB, RsxC, RsxD, RsxE and RsxG.</text>
</comment>
<comment type="subcellular location">
    <subcellularLocation>
        <location evidence="1">Cell inner membrane</location>
    </subcellularLocation>
</comment>
<comment type="similarity">
    <text evidence="1">Belongs to the 4Fe4S bacterial-type ferredoxin family. RnfB subfamily.</text>
</comment>
<evidence type="ECO:0000255" key="1">
    <source>
        <dbReference type="HAMAP-Rule" id="MF_00463"/>
    </source>
</evidence>
<gene>
    <name evidence="1" type="primary">rsxB</name>
    <name type="synonym">rnfB</name>
    <name type="ordered locus">SPC_2273</name>
</gene>
<accession>C0Q507</accession>